<organism>
    <name type="scientific">Escherichia coli O8 (strain IAI1)</name>
    <dbReference type="NCBI Taxonomy" id="585034"/>
    <lineage>
        <taxon>Bacteria</taxon>
        <taxon>Pseudomonadati</taxon>
        <taxon>Pseudomonadota</taxon>
        <taxon>Gammaproteobacteria</taxon>
        <taxon>Enterobacterales</taxon>
        <taxon>Enterobacteriaceae</taxon>
        <taxon>Escherichia</taxon>
    </lineage>
</organism>
<evidence type="ECO:0000255" key="1">
    <source>
        <dbReference type="HAMAP-Rule" id="MF_00006"/>
    </source>
</evidence>
<reference key="1">
    <citation type="journal article" date="2009" name="PLoS Genet.">
        <title>Organised genome dynamics in the Escherichia coli species results in highly diverse adaptive paths.</title>
        <authorList>
            <person name="Touchon M."/>
            <person name="Hoede C."/>
            <person name="Tenaillon O."/>
            <person name="Barbe V."/>
            <person name="Baeriswyl S."/>
            <person name="Bidet P."/>
            <person name="Bingen E."/>
            <person name="Bonacorsi S."/>
            <person name="Bouchier C."/>
            <person name="Bouvet O."/>
            <person name="Calteau A."/>
            <person name="Chiapello H."/>
            <person name="Clermont O."/>
            <person name="Cruveiller S."/>
            <person name="Danchin A."/>
            <person name="Diard M."/>
            <person name="Dossat C."/>
            <person name="Karoui M.E."/>
            <person name="Frapy E."/>
            <person name="Garry L."/>
            <person name="Ghigo J.M."/>
            <person name="Gilles A.M."/>
            <person name="Johnson J."/>
            <person name="Le Bouguenec C."/>
            <person name="Lescat M."/>
            <person name="Mangenot S."/>
            <person name="Martinez-Jehanne V."/>
            <person name="Matic I."/>
            <person name="Nassif X."/>
            <person name="Oztas S."/>
            <person name="Petit M.A."/>
            <person name="Pichon C."/>
            <person name="Rouy Z."/>
            <person name="Ruf C.S."/>
            <person name="Schneider D."/>
            <person name="Tourret J."/>
            <person name="Vacherie B."/>
            <person name="Vallenet D."/>
            <person name="Medigue C."/>
            <person name="Rocha E.P.C."/>
            <person name="Denamur E."/>
        </authorList>
    </citation>
    <scope>NUCLEOTIDE SEQUENCE [LARGE SCALE GENOMIC DNA]</scope>
    <source>
        <strain>IAI1</strain>
    </source>
</reference>
<feature type="chain" id="PRO_1000116206" description="Argininosuccinate lyase">
    <location>
        <begin position="1"/>
        <end position="457"/>
    </location>
</feature>
<dbReference type="EC" id="4.3.2.1" evidence="1"/>
<dbReference type="EMBL" id="CU928160">
    <property type="protein sequence ID" value="CAR00939.1"/>
    <property type="molecule type" value="Genomic_DNA"/>
</dbReference>
<dbReference type="RefSeq" id="WP_001230081.1">
    <property type="nucleotide sequence ID" value="NC_011741.1"/>
</dbReference>
<dbReference type="SMR" id="B7M714"/>
<dbReference type="GeneID" id="75203210"/>
<dbReference type="KEGG" id="ecr:ECIAI1_4168"/>
<dbReference type="HOGENOM" id="CLU_027272_2_3_6"/>
<dbReference type="UniPathway" id="UPA00068">
    <property type="reaction ID" value="UER00114"/>
</dbReference>
<dbReference type="GO" id="GO:0005829">
    <property type="term" value="C:cytosol"/>
    <property type="evidence" value="ECO:0007669"/>
    <property type="project" value="TreeGrafter"/>
</dbReference>
<dbReference type="GO" id="GO:0004056">
    <property type="term" value="F:argininosuccinate lyase activity"/>
    <property type="evidence" value="ECO:0007669"/>
    <property type="project" value="UniProtKB-UniRule"/>
</dbReference>
<dbReference type="GO" id="GO:0042450">
    <property type="term" value="P:arginine biosynthetic process via ornithine"/>
    <property type="evidence" value="ECO:0007669"/>
    <property type="project" value="InterPro"/>
</dbReference>
<dbReference type="GO" id="GO:0006526">
    <property type="term" value="P:L-arginine biosynthetic process"/>
    <property type="evidence" value="ECO:0007669"/>
    <property type="project" value="UniProtKB-UniRule"/>
</dbReference>
<dbReference type="CDD" id="cd01359">
    <property type="entry name" value="Argininosuccinate_lyase"/>
    <property type="match status" value="1"/>
</dbReference>
<dbReference type="FunFam" id="1.10.275.10:FF:000004">
    <property type="entry name" value="Argininosuccinate lyase"/>
    <property type="match status" value="1"/>
</dbReference>
<dbReference type="FunFam" id="1.10.40.30:FF:000001">
    <property type="entry name" value="Argininosuccinate lyase"/>
    <property type="match status" value="1"/>
</dbReference>
<dbReference type="FunFam" id="1.20.200.10:FF:000006">
    <property type="entry name" value="Argininosuccinate lyase"/>
    <property type="match status" value="1"/>
</dbReference>
<dbReference type="Gene3D" id="1.10.40.30">
    <property type="entry name" value="Fumarase/aspartase (C-terminal domain)"/>
    <property type="match status" value="1"/>
</dbReference>
<dbReference type="Gene3D" id="1.20.200.10">
    <property type="entry name" value="Fumarase/aspartase (Central domain)"/>
    <property type="match status" value="1"/>
</dbReference>
<dbReference type="Gene3D" id="1.10.275.10">
    <property type="entry name" value="Fumarase/aspartase (N-terminal domain)"/>
    <property type="match status" value="1"/>
</dbReference>
<dbReference type="HAMAP" id="MF_00006">
    <property type="entry name" value="Arg_succ_lyase"/>
    <property type="match status" value="1"/>
</dbReference>
<dbReference type="InterPro" id="IPR029419">
    <property type="entry name" value="Arg_succ_lyase_C"/>
</dbReference>
<dbReference type="InterPro" id="IPR009049">
    <property type="entry name" value="Argininosuccinate_lyase"/>
</dbReference>
<dbReference type="InterPro" id="IPR024083">
    <property type="entry name" value="Fumarase/histidase_N"/>
</dbReference>
<dbReference type="InterPro" id="IPR020557">
    <property type="entry name" value="Fumarate_lyase_CS"/>
</dbReference>
<dbReference type="InterPro" id="IPR000362">
    <property type="entry name" value="Fumarate_lyase_fam"/>
</dbReference>
<dbReference type="InterPro" id="IPR022761">
    <property type="entry name" value="Fumarate_lyase_N"/>
</dbReference>
<dbReference type="InterPro" id="IPR008948">
    <property type="entry name" value="L-Aspartase-like"/>
</dbReference>
<dbReference type="NCBIfam" id="TIGR00838">
    <property type="entry name" value="argH"/>
    <property type="match status" value="1"/>
</dbReference>
<dbReference type="NCBIfam" id="NF008964">
    <property type="entry name" value="PRK12308.1"/>
    <property type="match status" value="1"/>
</dbReference>
<dbReference type="PANTHER" id="PTHR43814">
    <property type="entry name" value="ARGININOSUCCINATE LYASE"/>
    <property type="match status" value="1"/>
</dbReference>
<dbReference type="PANTHER" id="PTHR43814:SF1">
    <property type="entry name" value="ARGININOSUCCINATE LYASE"/>
    <property type="match status" value="1"/>
</dbReference>
<dbReference type="Pfam" id="PF14698">
    <property type="entry name" value="ASL_C2"/>
    <property type="match status" value="1"/>
</dbReference>
<dbReference type="Pfam" id="PF00206">
    <property type="entry name" value="Lyase_1"/>
    <property type="match status" value="1"/>
</dbReference>
<dbReference type="PRINTS" id="PR00145">
    <property type="entry name" value="ARGSUCLYASE"/>
</dbReference>
<dbReference type="PRINTS" id="PR00149">
    <property type="entry name" value="FUMRATELYASE"/>
</dbReference>
<dbReference type="SUPFAM" id="SSF48557">
    <property type="entry name" value="L-aspartase-like"/>
    <property type="match status" value="1"/>
</dbReference>
<dbReference type="PROSITE" id="PS00163">
    <property type="entry name" value="FUMARATE_LYASES"/>
    <property type="match status" value="1"/>
</dbReference>
<proteinExistence type="inferred from homology"/>
<protein>
    <recommendedName>
        <fullName evidence="1">Argininosuccinate lyase</fullName>
        <shortName evidence="1">ASAL</shortName>
        <ecNumber evidence="1">4.3.2.1</ecNumber>
    </recommendedName>
    <alternativeName>
        <fullName evidence="1">Arginosuccinase</fullName>
    </alternativeName>
</protein>
<comment type="catalytic activity">
    <reaction evidence="1">
        <text>2-(N(omega)-L-arginino)succinate = fumarate + L-arginine</text>
        <dbReference type="Rhea" id="RHEA:24020"/>
        <dbReference type="ChEBI" id="CHEBI:29806"/>
        <dbReference type="ChEBI" id="CHEBI:32682"/>
        <dbReference type="ChEBI" id="CHEBI:57472"/>
        <dbReference type="EC" id="4.3.2.1"/>
    </reaction>
</comment>
<comment type="pathway">
    <text evidence="1">Amino-acid biosynthesis; L-arginine biosynthesis; L-arginine from L-ornithine and carbamoyl phosphate: step 3/3.</text>
</comment>
<comment type="subcellular location">
    <subcellularLocation>
        <location evidence="1">Cytoplasm</location>
    </subcellularLocation>
</comment>
<comment type="similarity">
    <text evidence="1">Belongs to the lyase 1 family. Argininosuccinate lyase subfamily.</text>
</comment>
<name>ARLY_ECO8A</name>
<accession>B7M714</accession>
<keyword id="KW-0028">Amino-acid biosynthesis</keyword>
<keyword id="KW-0055">Arginine biosynthesis</keyword>
<keyword id="KW-0963">Cytoplasm</keyword>
<keyword id="KW-0456">Lyase</keyword>
<sequence>MALWGGRFTQAADQRFKQFNDSLRFDYRLAEQDIVGSVAWSKALVTVGVLTAEEQAQLEEALNVLLEDVRARPQQILESDAEDIHSWVEGKLIDKVGQLGKKLHTGRSRNDQVATDLKLWCKDTVSELLTANRQLQSALVETAQNNQDAVMPGYTHLQRAQPVTFAHWCLAYVEMLARDESRLQDALKRLDVSPLGCGALAGTAYEIDREQLAGWLGFASATRNSLDSVSDRDHVLELLSAAAIGMVHLSRFAEDLIFFNTGEAGFVELSDRVTSGSSLMPQKKNPDALELIRGKCGRVQGALTGMMMTLKGLPLAYNKDMQEDKEGLFDALDTWLDCLHMAALVLDGIQVKRPRCQEAAQQGYANATELADYLVAKGVPFREAHHIVGEAVVEAIRQGKPLEDLPLDELQKFSPVIDEDVYPILSLQSCLDKRAAKGGVSPQQVAQAIAFAQARLE</sequence>
<gene>
    <name evidence="1" type="primary">argH</name>
    <name type="ordered locus">ECIAI1_4168</name>
</gene>